<evidence type="ECO:0000250" key="1"/>
<reference key="1">
    <citation type="journal article" date="1997" name="J. Bacteriol.">
        <title>Cloning and characterization of cspL and cspP, two cold-inducible genes from Lactobacillus plantarum.</title>
        <authorList>
            <person name="Mayo B."/>
            <person name="Derzelle S."/>
            <person name="Fernandez M."/>
            <person name="Leonard C."/>
            <person name="Ferain T."/>
            <person name="Hols P."/>
            <person name="Suarez J.E."/>
            <person name="Delcour J."/>
        </authorList>
    </citation>
    <scope>NUCLEOTIDE SEQUENCE [GENOMIC DNA]</scope>
    <source>
        <strain>LP80</strain>
    </source>
</reference>
<reference key="2">
    <citation type="journal article" date="2003" name="Proc. Natl. Acad. Sci. U.S.A.">
        <title>Complete genome sequence of Lactobacillus plantarum WCFS1.</title>
        <authorList>
            <person name="Kleerebezem M."/>
            <person name="Boekhorst J."/>
            <person name="van Kranenburg R."/>
            <person name="Molenaar D."/>
            <person name="Kuipers O.P."/>
            <person name="Leer R."/>
            <person name="Tarchini R."/>
            <person name="Peters S.A."/>
            <person name="Sandbrink H.M."/>
            <person name="Fiers M.W.E.J."/>
            <person name="Stiekema W."/>
            <person name="Klein Lankhorst R.M."/>
            <person name="Bron P.A."/>
            <person name="Hoffer S.M."/>
            <person name="Nierop Groot M.N."/>
            <person name="Kerkhoven R."/>
            <person name="De Vries M."/>
            <person name="Ursing B."/>
            <person name="De Vos W.M."/>
            <person name="Siezen R.J."/>
        </authorList>
    </citation>
    <scope>NUCLEOTIDE SEQUENCE [LARGE SCALE GENOMIC DNA]</scope>
    <source>
        <strain>ATCC BAA-793 / NCIMB 8826 / WCFS1</strain>
    </source>
</reference>
<reference key="3">
    <citation type="journal article" date="2012" name="J. Bacteriol.">
        <title>Complete resequencing and reannotation of the Lactobacillus plantarum WCFS1 genome.</title>
        <authorList>
            <person name="Siezen R.J."/>
            <person name="Francke C."/>
            <person name="Renckens B."/>
            <person name="Boekhorst J."/>
            <person name="Wels M."/>
            <person name="Kleerebezem M."/>
            <person name="van Hijum S.A."/>
        </authorList>
    </citation>
    <scope>NUCLEOTIDE SEQUENCE [LARGE SCALE GENOMIC DNA]</scope>
    <scope>GENOME REANNOTATION</scope>
    <source>
        <strain>ATCC BAA-793 / NCIMB 8826 / WCFS1</strain>
    </source>
</reference>
<accession>P96349</accession>
<accession>F9US59</accession>
<sequence length="66" mass="7300">MKNGTVKWFNADKGFGFITGEDGTDVFVHFSAIQTDGFKTLDEGQKVTYDEEQGDRGPQATNVQPQ</sequence>
<gene>
    <name type="primary">cspL</name>
    <name type="ordered locus">lp_0031</name>
</gene>
<name>CSP2_LACPL</name>
<protein>
    <recommendedName>
        <fullName>Cold shock protein 2</fullName>
    </recommendedName>
</protein>
<feature type="chain" id="PRO_0000100306" description="Cold shock protein 2">
    <location>
        <begin position="1"/>
        <end position="66"/>
    </location>
</feature>
<feature type="domain" description="CSD">
    <location>
        <begin position="4"/>
        <end position="63"/>
    </location>
</feature>
<dbReference type="EMBL" id="Y08940">
    <property type="protein sequence ID" value="CAA70139.1"/>
    <property type="molecule type" value="Genomic_DNA"/>
</dbReference>
<dbReference type="EMBL" id="AL935263">
    <property type="protein sequence ID" value="CCC77606.1"/>
    <property type="molecule type" value="Genomic_DNA"/>
</dbReference>
<dbReference type="RefSeq" id="WP_003643615.1">
    <property type="nucleotide sequence ID" value="NC_004567.2"/>
</dbReference>
<dbReference type="RefSeq" id="YP_004888120.1">
    <property type="nucleotide sequence ID" value="NC_004567.2"/>
</dbReference>
<dbReference type="SMR" id="P96349"/>
<dbReference type="STRING" id="220668.lp_0031"/>
<dbReference type="EnsemblBacteria" id="CCC77606">
    <property type="protein sequence ID" value="CCC77606"/>
    <property type="gene ID" value="lp_0031"/>
</dbReference>
<dbReference type="KEGG" id="lpl:lp_0031"/>
<dbReference type="PATRIC" id="fig|220668.9.peg.28"/>
<dbReference type="eggNOG" id="COG1278">
    <property type="taxonomic scope" value="Bacteria"/>
</dbReference>
<dbReference type="HOGENOM" id="CLU_117621_6_3_9"/>
<dbReference type="OrthoDB" id="9805039at2"/>
<dbReference type="PhylomeDB" id="P96349"/>
<dbReference type="Proteomes" id="UP000000432">
    <property type="component" value="Chromosome"/>
</dbReference>
<dbReference type="GO" id="GO:0005737">
    <property type="term" value="C:cytoplasm"/>
    <property type="evidence" value="ECO:0007669"/>
    <property type="project" value="UniProtKB-SubCell"/>
</dbReference>
<dbReference type="GO" id="GO:0003677">
    <property type="term" value="F:DNA binding"/>
    <property type="evidence" value="ECO:0007669"/>
    <property type="project" value="UniProtKB-KW"/>
</dbReference>
<dbReference type="CDD" id="cd04458">
    <property type="entry name" value="CSP_CDS"/>
    <property type="match status" value="1"/>
</dbReference>
<dbReference type="FunFam" id="2.40.50.140:FF:000006">
    <property type="entry name" value="Cold shock protein CspC"/>
    <property type="match status" value="1"/>
</dbReference>
<dbReference type="Gene3D" id="6.20.370.130">
    <property type="match status" value="1"/>
</dbReference>
<dbReference type="Gene3D" id="2.40.50.140">
    <property type="entry name" value="Nucleic acid-binding proteins"/>
    <property type="match status" value="1"/>
</dbReference>
<dbReference type="InterPro" id="IPR012156">
    <property type="entry name" value="Cold_shock_CspA"/>
</dbReference>
<dbReference type="InterPro" id="IPR050181">
    <property type="entry name" value="Cold_shock_domain"/>
</dbReference>
<dbReference type="InterPro" id="IPR011129">
    <property type="entry name" value="CSD"/>
</dbReference>
<dbReference type="InterPro" id="IPR019844">
    <property type="entry name" value="CSD_CS"/>
</dbReference>
<dbReference type="InterPro" id="IPR002059">
    <property type="entry name" value="CSP_DNA-bd"/>
</dbReference>
<dbReference type="InterPro" id="IPR012340">
    <property type="entry name" value="NA-bd_OB-fold"/>
</dbReference>
<dbReference type="PANTHER" id="PTHR11544">
    <property type="entry name" value="COLD SHOCK DOMAIN CONTAINING PROTEINS"/>
    <property type="match status" value="1"/>
</dbReference>
<dbReference type="Pfam" id="PF00313">
    <property type="entry name" value="CSD"/>
    <property type="match status" value="1"/>
</dbReference>
<dbReference type="PIRSF" id="PIRSF002599">
    <property type="entry name" value="Cold_shock_A"/>
    <property type="match status" value="1"/>
</dbReference>
<dbReference type="PRINTS" id="PR00050">
    <property type="entry name" value="COLDSHOCK"/>
</dbReference>
<dbReference type="SMART" id="SM00357">
    <property type="entry name" value="CSP"/>
    <property type="match status" value="1"/>
</dbReference>
<dbReference type="SUPFAM" id="SSF50249">
    <property type="entry name" value="Nucleic acid-binding proteins"/>
    <property type="match status" value="1"/>
</dbReference>
<dbReference type="PROSITE" id="PS00352">
    <property type="entry name" value="CSD_1"/>
    <property type="match status" value="1"/>
</dbReference>
<dbReference type="PROSITE" id="PS51857">
    <property type="entry name" value="CSD_2"/>
    <property type="match status" value="1"/>
</dbReference>
<comment type="subcellular location">
    <subcellularLocation>
        <location evidence="1">Cytoplasm</location>
    </subcellularLocation>
</comment>
<comment type="induction">
    <text>In response to low temperature.</text>
</comment>
<organism>
    <name type="scientific">Lactiplantibacillus plantarum (strain ATCC BAA-793 / NCIMB 8826 / WCFS1)</name>
    <name type="common">Lactobacillus plantarum</name>
    <dbReference type="NCBI Taxonomy" id="220668"/>
    <lineage>
        <taxon>Bacteria</taxon>
        <taxon>Bacillati</taxon>
        <taxon>Bacillota</taxon>
        <taxon>Bacilli</taxon>
        <taxon>Lactobacillales</taxon>
        <taxon>Lactobacillaceae</taxon>
        <taxon>Lactiplantibacillus</taxon>
    </lineage>
</organism>
<keyword id="KW-0010">Activator</keyword>
<keyword id="KW-0963">Cytoplasm</keyword>
<keyword id="KW-0238">DNA-binding</keyword>
<keyword id="KW-1185">Reference proteome</keyword>
<keyword id="KW-0346">Stress response</keyword>
<keyword id="KW-0804">Transcription</keyword>
<keyword id="KW-0805">Transcription regulation</keyword>
<proteinExistence type="evidence at transcript level"/>